<proteinExistence type="evidence at protein level"/>
<sequence length="775" mass="87677">MATPDSLALFTGLGLSENKARETLKNEALSTQLREAATQAHQILGSTIDKATGVLLYDLVSRLRDTRRRSFLVSYIANKKIHTGLQLSAALEYVRSHPQDPIDTKDFEQECGVGVVVTPEQIEEAVESTINKHQLQLLAERYRFNMGLLMGEARAALRWADGKMIKNEVDMQVLHLLGPKMEADLVKKPKVAKARLEETDRKTAKDVVEKGEVAGQTLSLMEQLRGEALKFHKPGENYKTPGYVITPYTMDLLKQHLEITGGQVRTRFPPEPNGILHIGHAKAINFNFGYAKANNGICFLRFDDTNPEKEEAKFFTAIYDMVTWLGYTPYKVTYASDYFDQLYAWAVELIHGGLAYVCHQRVEELKGHNPLPSPWRDRPKEESLLLFEAMRKGKFAEGEATLRMKLVMEDGKMDPVAYRVKYTPHHRTGDKWCIYPTYDYTHCLCDSIEHITHSLCTKEFQARRSSYFWLCNALKVYCPVQWEYGRLNLHYAVVSKRKILQLVAAGAVRDWDDPRLFTLTALRRRGFPPEAINNFCARVGVTVAQTTMEPHLLEACVRDVLNDAAPRAMAVLEPLQVVITNFPAPKPLDIRVPNFPADETKGFHQVPFASTVFIERSDFKEESEPGYKRLASGQPVGLRHTGYVIELQNIVRGSSGCVERLEVTCRRADAGEKPKAFIHWVSQPLVCEIRLYECLFQHKNPEDPVEVPGGFLSDLNPASLQVVEGALVDCSVALAKPFDKFQFERLGYFSVDPDSHQGQIVFNRTVTLKEDPGKI</sequence>
<name>SYQ_MOUSE</name>
<evidence type="ECO:0000250" key="1">
    <source>
        <dbReference type="UniProtKB" id="P00962"/>
    </source>
</evidence>
<evidence type="ECO:0000250" key="2">
    <source>
        <dbReference type="UniProtKB" id="P47897"/>
    </source>
</evidence>
<evidence type="ECO:0000255" key="3">
    <source>
        <dbReference type="RuleBase" id="RU363037"/>
    </source>
</evidence>
<evidence type="ECO:0000269" key="4">
    <source>
    </source>
</evidence>
<evidence type="ECO:0000305" key="5"/>
<evidence type="ECO:0000312" key="6">
    <source>
        <dbReference type="MGI" id="MGI:1915851"/>
    </source>
</evidence>
<evidence type="ECO:0007744" key="7">
    <source>
    </source>
</evidence>
<evidence type="ECO:0007744" key="8">
    <source>
    </source>
</evidence>
<dbReference type="EC" id="6.1.1.18" evidence="2"/>
<dbReference type="EMBL" id="AK030554">
    <property type="protein sequence ID" value="BAC27018.1"/>
    <property type="molecule type" value="mRNA"/>
</dbReference>
<dbReference type="EMBL" id="AK088049">
    <property type="protein sequence ID" value="BAC40118.1"/>
    <property type="molecule type" value="mRNA"/>
</dbReference>
<dbReference type="EMBL" id="AK145632">
    <property type="protein sequence ID" value="BAE26552.1"/>
    <property type="molecule type" value="mRNA"/>
</dbReference>
<dbReference type="EMBL" id="AK155759">
    <property type="protein sequence ID" value="BAE33422.1"/>
    <property type="molecule type" value="mRNA"/>
</dbReference>
<dbReference type="EMBL" id="AK165454">
    <property type="protein sequence ID" value="BAE38195.1"/>
    <property type="molecule type" value="mRNA"/>
</dbReference>
<dbReference type="EMBL" id="AK170826">
    <property type="protein sequence ID" value="BAE42057.1"/>
    <property type="molecule type" value="mRNA"/>
</dbReference>
<dbReference type="EMBL" id="CT010508">
    <property type="status" value="NOT_ANNOTATED_CDS"/>
    <property type="molecule type" value="Genomic_DNA"/>
</dbReference>
<dbReference type="EMBL" id="CH466560">
    <property type="protein sequence ID" value="EDL21297.1"/>
    <property type="molecule type" value="Genomic_DNA"/>
</dbReference>
<dbReference type="EMBL" id="BC079854">
    <property type="protein sequence ID" value="AAH79854.1"/>
    <property type="molecule type" value="mRNA"/>
</dbReference>
<dbReference type="CCDS" id="CCDS23530.1"/>
<dbReference type="RefSeq" id="NP_598555.2">
    <property type="nucleotide sequence ID" value="NM_133794.2"/>
</dbReference>
<dbReference type="SMR" id="Q8BML9"/>
<dbReference type="FunCoup" id="Q8BML9">
    <property type="interactions" value="2558"/>
</dbReference>
<dbReference type="IntAct" id="Q8BML9">
    <property type="interactions" value="1"/>
</dbReference>
<dbReference type="MINT" id="Q8BML9"/>
<dbReference type="STRING" id="10090.ENSMUSP00000006838"/>
<dbReference type="GlyGen" id="Q8BML9">
    <property type="glycosylation" value="3 sites, 1 N-linked glycan (1 site), 1 O-linked glycan (1 site)"/>
</dbReference>
<dbReference type="iPTMnet" id="Q8BML9"/>
<dbReference type="PhosphoSitePlus" id="Q8BML9"/>
<dbReference type="SwissPalm" id="Q8BML9"/>
<dbReference type="jPOST" id="Q8BML9"/>
<dbReference type="PaxDb" id="10090-ENSMUSP00000006838"/>
<dbReference type="PeptideAtlas" id="Q8BML9"/>
<dbReference type="ProteomicsDB" id="254509"/>
<dbReference type="Pumba" id="Q8BML9"/>
<dbReference type="Antibodypedia" id="30393">
    <property type="antibodies" value="143 antibodies from 26 providers"/>
</dbReference>
<dbReference type="DNASU" id="97541"/>
<dbReference type="Ensembl" id="ENSMUST00000006838.16">
    <property type="protein sequence ID" value="ENSMUSP00000006838.9"/>
    <property type="gene ID" value="ENSMUSG00000032604.17"/>
</dbReference>
<dbReference type="GeneID" id="97541"/>
<dbReference type="KEGG" id="mmu:97541"/>
<dbReference type="UCSC" id="uc009rpy.2">
    <property type="organism name" value="mouse"/>
</dbReference>
<dbReference type="AGR" id="MGI:1915851"/>
<dbReference type="CTD" id="5859"/>
<dbReference type="MGI" id="MGI:1915851">
    <property type="gene designation" value="Qars1"/>
</dbReference>
<dbReference type="VEuPathDB" id="HostDB:ENSMUSG00000032604"/>
<dbReference type="eggNOG" id="KOG1148">
    <property type="taxonomic scope" value="Eukaryota"/>
</dbReference>
<dbReference type="GeneTree" id="ENSGT00550000074972"/>
<dbReference type="InParanoid" id="Q8BML9"/>
<dbReference type="OMA" id="TWCIYPM"/>
<dbReference type="OrthoDB" id="10250478at2759"/>
<dbReference type="PhylomeDB" id="Q8BML9"/>
<dbReference type="TreeFam" id="TF105683"/>
<dbReference type="Reactome" id="R-MMU-9856649">
    <property type="pathway name" value="Transcriptional and post-translational regulation of MITF-M expression and activity"/>
</dbReference>
<dbReference type="BioGRID-ORCS" id="97541">
    <property type="hits" value="25 hits in 70 CRISPR screens"/>
</dbReference>
<dbReference type="CD-CODE" id="CE726F99">
    <property type="entry name" value="Postsynaptic density"/>
</dbReference>
<dbReference type="ChiTaRS" id="Qars">
    <property type="organism name" value="mouse"/>
</dbReference>
<dbReference type="PRO" id="PR:Q8BML9"/>
<dbReference type="Proteomes" id="UP000000589">
    <property type="component" value="Chromosome 9"/>
</dbReference>
<dbReference type="RNAct" id="Q8BML9">
    <property type="molecule type" value="protein"/>
</dbReference>
<dbReference type="Bgee" id="ENSMUSG00000032604">
    <property type="expression patterns" value="Expressed in seminal vesicle and 281 other cell types or tissues"/>
</dbReference>
<dbReference type="ExpressionAtlas" id="Q8BML9">
    <property type="expression patterns" value="baseline and differential"/>
</dbReference>
<dbReference type="GO" id="GO:0017101">
    <property type="term" value="C:aminoacyl-tRNA synthetase multienzyme complex"/>
    <property type="evidence" value="ECO:0000314"/>
    <property type="project" value="CAFA"/>
</dbReference>
<dbReference type="GO" id="GO:0005829">
    <property type="term" value="C:cytosol"/>
    <property type="evidence" value="ECO:0007669"/>
    <property type="project" value="UniProtKB-SubCell"/>
</dbReference>
<dbReference type="GO" id="GO:0005524">
    <property type="term" value="F:ATP binding"/>
    <property type="evidence" value="ECO:0007669"/>
    <property type="project" value="UniProtKB-KW"/>
</dbReference>
<dbReference type="GO" id="GO:0004819">
    <property type="term" value="F:glutamine-tRNA ligase activity"/>
    <property type="evidence" value="ECO:0000250"/>
    <property type="project" value="UniProtKB"/>
</dbReference>
<dbReference type="GO" id="GO:0019901">
    <property type="term" value="F:protein kinase binding"/>
    <property type="evidence" value="ECO:0000266"/>
    <property type="project" value="MGI"/>
</dbReference>
<dbReference type="GO" id="GO:0004860">
    <property type="term" value="F:protein kinase inhibitor activity"/>
    <property type="evidence" value="ECO:0007669"/>
    <property type="project" value="Ensembl"/>
</dbReference>
<dbReference type="GO" id="GO:0003723">
    <property type="term" value="F:RNA binding"/>
    <property type="evidence" value="ECO:0000266"/>
    <property type="project" value="MGI"/>
</dbReference>
<dbReference type="GO" id="GO:0007420">
    <property type="term" value="P:brain development"/>
    <property type="evidence" value="ECO:0007669"/>
    <property type="project" value="Ensembl"/>
</dbReference>
<dbReference type="GO" id="GO:0006425">
    <property type="term" value="P:glutaminyl-tRNA aminoacylation"/>
    <property type="evidence" value="ECO:0000250"/>
    <property type="project" value="UniProtKB"/>
</dbReference>
<dbReference type="GO" id="GO:0043066">
    <property type="term" value="P:negative regulation of apoptotic process"/>
    <property type="evidence" value="ECO:0000266"/>
    <property type="project" value="MGI"/>
</dbReference>
<dbReference type="GO" id="GO:2001234">
    <property type="term" value="P:negative regulation of apoptotic signaling pathway"/>
    <property type="evidence" value="ECO:0007669"/>
    <property type="project" value="Ensembl"/>
</dbReference>
<dbReference type="GO" id="GO:0045892">
    <property type="term" value="P:negative regulation of DNA-templated transcription"/>
    <property type="evidence" value="ECO:0007669"/>
    <property type="project" value="Ensembl"/>
</dbReference>
<dbReference type="GO" id="GO:0032873">
    <property type="term" value="P:negative regulation of stress-activated MAPK cascade"/>
    <property type="evidence" value="ECO:0007669"/>
    <property type="project" value="Ensembl"/>
</dbReference>
<dbReference type="CDD" id="cd00807">
    <property type="entry name" value="GlnRS_core"/>
    <property type="match status" value="1"/>
</dbReference>
<dbReference type="FunFam" id="1.10.8.1290:FF:000001">
    <property type="entry name" value="Glutamine--tRNA ligase"/>
    <property type="match status" value="1"/>
</dbReference>
<dbReference type="FunFam" id="1.10.10.2420:FF:000001">
    <property type="entry name" value="Glutamine--tRNA ligase cytoplasmic"/>
    <property type="match status" value="1"/>
</dbReference>
<dbReference type="FunFam" id="3.40.50.620:FF:000049">
    <property type="entry name" value="Probable glutamine--tRNA ligase"/>
    <property type="match status" value="1"/>
</dbReference>
<dbReference type="FunFam" id="2.40.240.10:FF:000008">
    <property type="entry name" value="probable glutamine--tRNA ligase"/>
    <property type="match status" value="1"/>
</dbReference>
<dbReference type="FunFam" id="2.40.240.10:FF:000006">
    <property type="entry name" value="Putative glutamine--tRNA ligase"/>
    <property type="match status" value="1"/>
</dbReference>
<dbReference type="Gene3D" id="1.10.10.2420">
    <property type="match status" value="1"/>
</dbReference>
<dbReference type="Gene3D" id="1.10.8.1290">
    <property type="entry name" value="Glutaminyl-tRNA synthetase, non-specific RNA binding region part 1, domain 1"/>
    <property type="match status" value="1"/>
</dbReference>
<dbReference type="Gene3D" id="3.40.50.620">
    <property type="entry name" value="HUPs"/>
    <property type="match status" value="1"/>
</dbReference>
<dbReference type="Gene3D" id="2.40.240.10">
    <property type="entry name" value="Ribosomal Protein L25, Chain P"/>
    <property type="match status" value="2"/>
</dbReference>
<dbReference type="InterPro" id="IPR001412">
    <property type="entry name" value="aa-tRNA-synth_I_CS"/>
</dbReference>
<dbReference type="InterPro" id="IPR004514">
    <property type="entry name" value="Gln-tRNA-synth"/>
</dbReference>
<dbReference type="InterPro" id="IPR007638">
    <property type="entry name" value="Gln-tRNA-synth_Ib_RNA-bd_2"/>
</dbReference>
<dbReference type="InterPro" id="IPR007639">
    <property type="entry name" value="Gln-tRNA-synth_Ib_RNA-bd_N"/>
</dbReference>
<dbReference type="InterPro" id="IPR042558">
    <property type="entry name" value="Gln-tRNA-synth_Ib_RNA-bd_N_1"/>
</dbReference>
<dbReference type="InterPro" id="IPR042559">
    <property type="entry name" value="Gln-tRNA-synth_Ib_RNA-bd_N_2"/>
</dbReference>
<dbReference type="InterPro" id="IPR050132">
    <property type="entry name" value="Gln/Glu-tRNA_Ligase"/>
</dbReference>
<dbReference type="InterPro" id="IPR000924">
    <property type="entry name" value="Glu/Gln-tRNA-synth"/>
</dbReference>
<dbReference type="InterPro" id="IPR020058">
    <property type="entry name" value="Glu/Gln-tRNA-synth_Ib_cat-dom"/>
</dbReference>
<dbReference type="InterPro" id="IPR020059">
    <property type="entry name" value="Glu/Gln-tRNA-synth_Ib_codon-bd"/>
</dbReference>
<dbReference type="InterPro" id="IPR020056">
    <property type="entry name" value="Rbsml_bL25/Gln-tRNA_synth_N"/>
</dbReference>
<dbReference type="InterPro" id="IPR011035">
    <property type="entry name" value="Ribosomal_bL25/Gln-tRNA_synth"/>
</dbReference>
<dbReference type="InterPro" id="IPR014729">
    <property type="entry name" value="Rossmann-like_a/b/a_fold"/>
</dbReference>
<dbReference type="InterPro" id="IPR049437">
    <property type="entry name" value="tRNA-synt_1c_C2"/>
</dbReference>
<dbReference type="NCBIfam" id="TIGR00440">
    <property type="entry name" value="glnS"/>
    <property type="match status" value="1"/>
</dbReference>
<dbReference type="PANTHER" id="PTHR43097:SF4">
    <property type="entry name" value="GLUTAMINE--TRNA LIGASE"/>
    <property type="match status" value="1"/>
</dbReference>
<dbReference type="PANTHER" id="PTHR43097">
    <property type="entry name" value="GLUTAMINE-TRNA LIGASE"/>
    <property type="match status" value="1"/>
</dbReference>
<dbReference type="Pfam" id="PF00749">
    <property type="entry name" value="tRNA-synt_1c"/>
    <property type="match status" value="1"/>
</dbReference>
<dbReference type="Pfam" id="PF03950">
    <property type="entry name" value="tRNA-synt_1c_C"/>
    <property type="match status" value="1"/>
</dbReference>
<dbReference type="Pfam" id="PF20974">
    <property type="entry name" value="tRNA-synt_1c_C2"/>
    <property type="match status" value="1"/>
</dbReference>
<dbReference type="Pfam" id="PF04558">
    <property type="entry name" value="tRNA_synt_1c_R1"/>
    <property type="match status" value="1"/>
</dbReference>
<dbReference type="Pfam" id="PF04557">
    <property type="entry name" value="tRNA_synt_1c_R2"/>
    <property type="match status" value="1"/>
</dbReference>
<dbReference type="PRINTS" id="PR00987">
    <property type="entry name" value="TRNASYNTHGLU"/>
</dbReference>
<dbReference type="SUPFAM" id="SSF52374">
    <property type="entry name" value="Nucleotidylyl transferase"/>
    <property type="match status" value="1"/>
</dbReference>
<dbReference type="SUPFAM" id="SSF50715">
    <property type="entry name" value="Ribosomal protein L25-like"/>
    <property type="match status" value="1"/>
</dbReference>
<dbReference type="PROSITE" id="PS00178">
    <property type="entry name" value="AA_TRNA_LIGASE_I"/>
    <property type="match status" value="1"/>
</dbReference>
<accession>Q8BML9</accession>
<accession>Q3TN94</accession>
<accession>Q8BU21</accession>
<reference key="1">
    <citation type="journal article" date="2005" name="Science">
        <title>The transcriptional landscape of the mammalian genome.</title>
        <authorList>
            <person name="Carninci P."/>
            <person name="Kasukawa T."/>
            <person name="Katayama S."/>
            <person name="Gough J."/>
            <person name="Frith M.C."/>
            <person name="Maeda N."/>
            <person name="Oyama R."/>
            <person name="Ravasi T."/>
            <person name="Lenhard B."/>
            <person name="Wells C."/>
            <person name="Kodzius R."/>
            <person name="Shimokawa K."/>
            <person name="Bajic V.B."/>
            <person name="Brenner S.E."/>
            <person name="Batalov S."/>
            <person name="Forrest A.R."/>
            <person name="Zavolan M."/>
            <person name="Davis M.J."/>
            <person name="Wilming L.G."/>
            <person name="Aidinis V."/>
            <person name="Allen J.E."/>
            <person name="Ambesi-Impiombato A."/>
            <person name="Apweiler R."/>
            <person name="Aturaliya R.N."/>
            <person name="Bailey T.L."/>
            <person name="Bansal M."/>
            <person name="Baxter L."/>
            <person name="Beisel K.W."/>
            <person name="Bersano T."/>
            <person name="Bono H."/>
            <person name="Chalk A.M."/>
            <person name="Chiu K.P."/>
            <person name="Choudhary V."/>
            <person name="Christoffels A."/>
            <person name="Clutterbuck D.R."/>
            <person name="Crowe M.L."/>
            <person name="Dalla E."/>
            <person name="Dalrymple B.P."/>
            <person name="de Bono B."/>
            <person name="Della Gatta G."/>
            <person name="di Bernardo D."/>
            <person name="Down T."/>
            <person name="Engstrom P."/>
            <person name="Fagiolini M."/>
            <person name="Faulkner G."/>
            <person name="Fletcher C.F."/>
            <person name="Fukushima T."/>
            <person name="Furuno M."/>
            <person name="Futaki S."/>
            <person name="Gariboldi M."/>
            <person name="Georgii-Hemming P."/>
            <person name="Gingeras T.R."/>
            <person name="Gojobori T."/>
            <person name="Green R.E."/>
            <person name="Gustincich S."/>
            <person name="Harbers M."/>
            <person name="Hayashi Y."/>
            <person name="Hensch T.K."/>
            <person name="Hirokawa N."/>
            <person name="Hill D."/>
            <person name="Huminiecki L."/>
            <person name="Iacono M."/>
            <person name="Ikeo K."/>
            <person name="Iwama A."/>
            <person name="Ishikawa T."/>
            <person name="Jakt M."/>
            <person name="Kanapin A."/>
            <person name="Katoh M."/>
            <person name="Kawasawa Y."/>
            <person name="Kelso J."/>
            <person name="Kitamura H."/>
            <person name="Kitano H."/>
            <person name="Kollias G."/>
            <person name="Krishnan S.P."/>
            <person name="Kruger A."/>
            <person name="Kummerfeld S.K."/>
            <person name="Kurochkin I.V."/>
            <person name="Lareau L.F."/>
            <person name="Lazarevic D."/>
            <person name="Lipovich L."/>
            <person name="Liu J."/>
            <person name="Liuni S."/>
            <person name="McWilliam S."/>
            <person name="Madan Babu M."/>
            <person name="Madera M."/>
            <person name="Marchionni L."/>
            <person name="Matsuda H."/>
            <person name="Matsuzawa S."/>
            <person name="Miki H."/>
            <person name="Mignone F."/>
            <person name="Miyake S."/>
            <person name="Morris K."/>
            <person name="Mottagui-Tabar S."/>
            <person name="Mulder N."/>
            <person name="Nakano N."/>
            <person name="Nakauchi H."/>
            <person name="Ng P."/>
            <person name="Nilsson R."/>
            <person name="Nishiguchi S."/>
            <person name="Nishikawa S."/>
            <person name="Nori F."/>
            <person name="Ohara O."/>
            <person name="Okazaki Y."/>
            <person name="Orlando V."/>
            <person name="Pang K.C."/>
            <person name="Pavan W.J."/>
            <person name="Pavesi G."/>
            <person name="Pesole G."/>
            <person name="Petrovsky N."/>
            <person name="Piazza S."/>
            <person name="Reed J."/>
            <person name="Reid J.F."/>
            <person name="Ring B.Z."/>
            <person name="Ringwald M."/>
            <person name="Rost B."/>
            <person name="Ruan Y."/>
            <person name="Salzberg S.L."/>
            <person name="Sandelin A."/>
            <person name="Schneider C."/>
            <person name="Schoenbach C."/>
            <person name="Sekiguchi K."/>
            <person name="Semple C.A."/>
            <person name="Seno S."/>
            <person name="Sessa L."/>
            <person name="Sheng Y."/>
            <person name="Shibata Y."/>
            <person name="Shimada H."/>
            <person name="Shimada K."/>
            <person name="Silva D."/>
            <person name="Sinclair B."/>
            <person name="Sperling S."/>
            <person name="Stupka E."/>
            <person name="Sugiura K."/>
            <person name="Sultana R."/>
            <person name="Takenaka Y."/>
            <person name="Taki K."/>
            <person name="Tammoja K."/>
            <person name="Tan S.L."/>
            <person name="Tang S."/>
            <person name="Taylor M.S."/>
            <person name="Tegner J."/>
            <person name="Teichmann S.A."/>
            <person name="Ueda H.R."/>
            <person name="van Nimwegen E."/>
            <person name="Verardo R."/>
            <person name="Wei C.L."/>
            <person name="Yagi K."/>
            <person name="Yamanishi H."/>
            <person name="Zabarovsky E."/>
            <person name="Zhu S."/>
            <person name="Zimmer A."/>
            <person name="Hide W."/>
            <person name="Bult C."/>
            <person name="Grimmond S.M."/>
            <person name="Teasdale R.D."/>
            <person name="Liu E.T."/>
            <person name="Brusic V."/>
            <person name="Quackenbush J."/>
            <person name="Wahlestedt C."/>
            <person name="Mattick J.S."/>
            <person name="Hume D.A."/>
            <person name="Kai C."/>
            <person name="Sasaki D."/>
            <person name="Tomaru Y."/>
            <person name="Fukuda S."/>
            <person name="Kanamori-Katayama M."/>
            <person name="Suzuki M."/>
            <person name="Aoki J."/>
            <person name="Arakawa T."/>
            <person name="Iida J."/>
            <person name="Imamura K."/>
            <person name="Itoh M."/>
            <person name="Kato T."/>
            <person name="Kawaji H."/>
            <person name="Kawagashira N."/>
            <person name="Kawashima T."/>
            <person name="Kojima M."/>
            <person name="Kondo S."/>
            <person name="Konno H."/>
            <person name="Nakano K."/>
            <person name="Ninomiya N."/>
            <person name="Nishio T."/>
            <person name="Okada M."/>
            <person name="Plessy C."/>
            <person name="Shibata K."/>
            <person name="Shiraki T."/>
            <person name="Suzuki S."/>
            <person name="Tagami M."/>
            <person name="Waki K."/>
            <person name="Watahiki A."/>
            <person name="Okamura-Oho Y."/>
            <person name="Suzuki H."/>
            <person name="Kawai J."/>
            <person name="Hayashizaki Y."/>
        </authorList>
    </citation>
    <scope>NUCLEOTIDE SEQUENCE [LARGE SCALE MRNA]</scope>
    <source>
        <strain>C57BL/6J</strain>
        <tissue>Pituitary</tissue>
    </source>
</reference>
<reference key="2">
    <citation type="journal article" date="2009" name="PLoS Biol.">
        <title>Lineage-specific biology revealed by a finished genome assembly of the mouse.</title>
        <authorList>
            <person name="Church D.M."/>
            <person name="Goodstadt L."/>
            <person name="Hillier L.W."/>
            <person name="Zody M.C."/>
            <person name="Goldstein S."/>
            <person name="She X."/>
            <person name="Bult C.J."/>
            <person name="Agarwala R."/>
            <person name="Cherry J.L."/>
            <person name="DiCuccio M."/>
            <person name="Hlavina W."/>
            <person name="Kapustin Y."/>
            <person name="Meric P."/>
            <person name="Maglott D."/>
            <person name="Birtle Z."/>
            <person name="Marques A.C."/>
            <person name="Graves T."/>
            <person name="Zhou S."/>
            <person name="Teague B."/>
            <person name="Potamousis K."/>
            <person name="Churas C."/>
            <person name="Place M."/>
            <person name="Herschleb J."/>
            <person name="Runnheim R."/>
            <person name="Forrest D."/>
            <person name="Amos-Landgraf J."/>
            <person name="Schwartz D.C."/>
            <person name="Cheng Z."/>
            <person name="Lindblad-Toh K."/>
            <person name="Eichler E.E."/>
            <person name="Ponting C.P."/>
        </authorList>
    </citation>
    <scope>NUCLEOTIDE SEQUENCE [LARGE SCALE GENOMIC DNA]</scope>
    <source>
        <strain>C57BL/6J</strain>
    </source>
</reference>
<reference key="3">
    <citation type="submission" date="2005-07" db="EMBL/GenBank/DDBJ databases">
        <authorList>
            <person name="Mural R.J."/>
            <person name="Adams M.D."/>
            <person name="Myers E.W."/>
            <person name="Smith H.O."/>
            <person name="Venter J.C."/>
        </authorList>
    </citation>
    <scope>NUCLEOTIDE SEQUENCE [LARGE SCALE GENOMIC DNA]</scope>
</reference>
<reference key="4">
    <citation type="journal article" date="2004" name="Genome Res.">
        <title>The status, quality, and expansion of the NIH full-length cDNA project: the Mammalian Gene Collection (MGC).</title>
        <authorList>
            <consortium name="The MGC Project Team"/>
        </authorList>
    </citation>
    <scope>NUCLEOTIDE SEQUENCE [LARGE SCALE MRNA]</scope>
    <source>
        <strain>C57BL/6J</strain>
        <tissue>Brain</tissue>
    </source>
</reference>
<reference key="5">
    <citation type="journal article" date="2002" name="Proc. Natl. Acad. Sci. U.S.A.">
        <title>p38 is essential for the assembly and stability of macromolecular tRNA synthetase complex: implications for its physiological significance.</title>
        <authorList>
            <person name="Kim J.Y."/>
            <person name="Kang Y.-S."/>
            <person name="Lee J.-W."/>
            <person name="Kim H.J."/>
            <person name="Ahn Y.H."/>
            <person name="Park H."/>
            <person name="Ko Y.-G."/>
            <person name="Kim S."/>
        </authorList>
    </citation>
    <scope>SUBUNIT</scope>
</reference>
<reference key="6">
    <citation type="journal article" date="2007" name="Proc. Natl. Acad. Sci. U.S.A.">
        <title>Large-scale phosphorylation analysis of mouse liver.</title>
        <authorList>
            <person name="Villen J."/>
            <person name="Beausoleil S.A."/>
            <person name="Gerber S.A."/>
            <person name="Gygi S.P."/>
        </authorList>
    </citation>
    <scope>PHOSPHORYLATION [LARGE SCALE ANALYSIS] AT SER-70</scope>
    <scope>IDENTIFICATION BY MASS SPECTROMETRY [LARGE SCALE ANALYSIS]</scope>
    <source>
        <tissue>Liver</tissue>
    </source>
</reference>
<reference key="7">
    <citation type="journal article" date="2010" name="Cell">
        <title>A tissue-specific atlas of mouse protein phosphorylation and expression.</title>
        <authorList>
            <person name="Huttlin E.L."/>
            <person name="Jedrychowski M.P."/>
            <person name="Elias J.E."/>
            <person name="Goswami T."/>
            <person name="Rad R."/>
            <person name="Beausoleil S.A."/>
            <person name="Villen J."/>
            <person name="Haas W."/>
            <person name="Sowa M.E."/>
            <person name="Gygi S.P."/>
        </authorList>
    </citation>
    <scope>PHOSPHORYLATION [LARGE SCALE ANALYSIS] AT SER-70</scope>
    <scope>IDENTIFICATION BY MASS SPECTROMETRY [LARGE SCALE ANALYSIS]</scope>
    <source>
        <tissue>Brain</tissue>
        <tissue>Brown adipose tissue</tissue>
        <tissue>Heart</tissue>
        <tissue>Kidney</tissue>
        <tissue>Liver</tissue>
        <tissue>Lung</tissue>
        <tissue>Pancreas</tissue>
        <tissue>Spleen</tissue>
        <tissue>Testis</tissue>
    </source>
</reference>
<comment type="function">
    <text evidence="2">Glutamine--tRNA ligase. Plays a critical role in brain development.</text>
</comment>
<comment type="catalytic activity">
    <reaction evidence="2">
        <text>tRNA(Gln) + L-glutamine + ATP = L-glutaminyl-tRNA(Gln) + AMP + diphosphate</text>
        <dbReference type="Rhea" id="RHEA:20121"/>
        <dbReference type="Rhea" id="RHEA-COMP:9662"/>
        <dbReference type="Rhea" id="RHEA-COMP:9681"/>
        <dbReference type="ChEBI" id="CHEBI:30616"/>
        <dbReference type="ChEBI" id="CHEBI:33019"/>
        <dbReference type="ChEBI" id="CHEBI:58359"/>
        <dbReference type="ChEBI" id="CHEBI:78442"/>
        <dbReference type="ChEBI" id="CHEBI:78521"/>
        <dbReference type="ChEBI" id="CHEBI:456215"/>
        <dbReference type="EC" id="6.1.1.18"/>
    </reaction>
</comment>
<comment type="subunit">
    <text evidence="2 4">Monomer. Part of a multisubunit complex that groups tRNA ligases for Arg (RARS1), Asp (DARS1), Gln (QARS1), Ile (IARS1), Leu (LARS1), Lys (KARS1), Met (MARS1) the bifunctional ligase for Glu and Pro (EPRS1) and the auxiliary subunits AIMP1/p43, AIMP2/p38 and EEF1E1/p18 (PubMed:12060739). Interacts with RARS1. Part of a complex composed of RARS1, QARS1 and AIMP1 (By similarity).</text>
</comment>
<comment type="subcellular location">
    <subcellularLocation>
        <location evidence="2">Cytoplasm</location>
        <location evidence="2">Cytosol</location>
    </subcellularLocation>
    <subcellularLocation>
        <location evidence="2">Cytoplasm</location>
    </subcellularLocation>
</comment>
<comment type="similarity">
    <text evidence="3">Belongs to the class-I aminoacyl-tRNA synthetase family.</text>
</comment>
<keyword id="KW-0007">Acetylation</keyword>
<keyword id="KW-0030">Aminoacyl-tRNA synthetase</keyword>
<keyword id="KW-0067">ATP-binding</keyword>
<keyword id="KW-0963">Cytoplasm</keyword>
<keyword id="KW-0436">Ligase</keyword>
<keyword id="KW-0547">Nucleotide-binding</keyword>
<keyword id="KW-0597">Phosphoprotein</keyword>
<keyword id="KW-0648">Protein biosynthesis</keyword>
<keyword id="KW-1185">Reference proteome</keyword>
<organism>
    <name type="scientific">Mus musculus</name>
    <name type="common">Mouse</name>
    <dbReference type="NCBI Taxonomy" id="10090"/>
    <lineage>
        <taxon>Eukaryota</taxon>
        <taxon>Metazoa</taxon>
        <taxon>Chordata</taxon>
        <taxon>Craniata</taxon>
        <taxon>Vertebrata</taxon>
        <taxon>Euteleostomi</taxon>
        <taxon>Mammalia</taxon>
        <taxon>Eutheria</taxon>
        <taxon>Euarchontoglires</taxon>
        <taxon>Glires</taxon>
        <taxon>Rodentia</taxon>
        <taxon>Myomorpha</taxon>
        <taxon>Muroidea</taxon>
        <taxon>Muridae</taxon>
        <taxon>Murinae</taxon>
        <taxon>Mus</taxon>
        <taxon>Mus</taxon>
    </lineage>
</organism>
<gene>
    <name type="primary">Qars1</name>
    <name evidence="6" type="synonym">Qars</name>
</gene>
<feature type="initiator methionine" description="Removed" evidence="2">
    <location>
        <position position="1"/>
    </location>
</feature>
<feature type="chain" id="PRO_0000441172" description="Glutamine--tRNA ligase">
    <location>
        <begin position="2"/>
        <end position="775"/>
    </location>
</feature>
<feature type="binding site" evidence="1">
    <location>
        <begin position="271"/>
        <end position="273"/>
    </location>
    <ligand>
        <name>ATP</name>
        <dbReference type="ChEBI" id="CHEBI:30616"/>
    </ligand>
</feature>
<feature type="binding site" evidence="1">
    <location>
        <begin position="277"/>
        <end position="283"/>
    </location>
    <ligand>
        <name>ATP</name>
        <dbReference type="ChEBI" id="CHEBI:30616"/>
    </ligand>
</feature>
<feature type="binding site" evidence="1">
    <location>
        <position position="303"/>
    </location>
    <ligand>
        <name>L-glutamine</name>
        <dbReference type="ChEBI" id="CHEBI:58359"/>
    </ligand>
</feature>
<feature type="binding site" evidence="1">
    <location>
        <position position="438"/>
    </location>
    <ligand>
        <name>L-glutamine</name>
        <dbReference type="ChEBI" id="CHEBI:58359"/>
    </ligand>
</feature>
<feature type="binding site" evidence="1">
    <location>
        <position position="457"/>
    </location>
    <ligand>
        <name>ATP</name>
        <dbReference type="ChEBI" id="CHEBI:30616"/>
    </ligand>
</feature>
<feature type="binding site" evidence="1">
    <location>
        <begin position="486"/>
        <end position="487"/>
    </location>
    <ligand>
        <name>ATP</name>
        <dbReference type="ChEBI" id="CHEBI:30616"/>
    </ligand>
</feature>
<feature type="binding site" evidence="1">
    <location>
        <begin position="494"/>
        <end position="496"/>
    </location>
    <ligand>
        <name>ATP</name>
        <dbReference type="ChEBI" id="CHEBI:30616"/>
    </ligand>
</feature>
<feature type="modified residue" description="N-acetylalanine" evidence="2">
    <location>
        <position position="2"/>
    </location>
</feature>
<feature type="modified residue" description="Phosphoserine" evidence="7 8">
    <location>
        <position position="70"/>
    </location>
</feature>
<feature type="modified residue" description="N6-acetyllysine" evidence="2">
    <location>
        <position position="309"/>
    </location>
</feature>
<feature type="modified residue" description="Phosphoserine" evidence="2">
    <location>
        <position position="495"/>
    </location>
</feature>
<feature type="sequence conflict" description="In Ref. 1; BAE38195." evidence="5" ref="1">
    <original>E</original>
    <variation>G</variation>
    <location>
        <position position="140"/>
    </location>
</feature>
<feature type="sequence conflict" description="In Ref. 1; BAC40118/BAE42057 and 3; EDL21297." evidence="5" ref="1 3">
    <original>C</original>
    <variation>R</variation>
    <location>
        <position position="694"/>
    </location>
</feature>
<protein>
    <recommendedName>
        <fullName>Glutamine--tRNA ligase</fullName>
        <ecNumber evidence="2">6.1.1.18</ecNumber>
    </recommendedName>
    <alternativeName>
        <fullName>Glutaminyl-tRNA synthetase</fullName>
        <shortName>GlnRS</shortName>
    </alternativeName>
</protein>